<proteinExistence type="inferred from homology"/>
<keyword id="KW-0028">Amino-acid biosynthesis</keyword>
<keyword id="KW-0057">Aromatic amino acid biosynthesis</keyword>
<keyword id="KW-0274">FAD</keyword>
<keyword id="KW-0285">Flavoprotein</keyword>
<keyword id="KW-0288">FMN</keyword>
<keyword id="KW-0456">Lyase</keyword>
<keyword id="KW-0521">NADP</keyword>
<dbReference type="EC" id="4.2.3.5" evidence="1"/>
<dbReference type="EMBL" id="CP001111">
    <property type="protein sequence ID" value="ACF52556.1"/>
    <property type="molecule type" value="Genomic_DNA"/>
</dbReference>
<dbReference type="RefSeq" id="WP_012511727.1">
    <property type="nucleotide sequence ID" value="NC_011071.1"/>
</dbReference>
<dbReference type="SMR" id="B4SQW1"/>
<dbReference type="STRING" id="391008.Smal_2856"/>
<dbReference type="KEGG" id="smt:Smal_2856"/>
<dbReference type="eggNOG" id="COG0082">
    <property type="taxonomic scope" value="Bacteria"/>
</dbReference>
<dbReference type="HOGENOM" id="CLU_034547_0_2_6"/>
<dbReference type="OrthoDB" id="9771806at2"/>
<dbReference type="UniPathway" id="UPA00053">
    <property type="reaction ID" value="UER00090"/>
</dbReference>
<dbReference type="Proteomes" id="UP000001867">
    <property type="component" value="Chromosome"/>
</dbReference>
<dbReference type="GO" id="GO:0005829">
    <property type="term" value="C:cytosol"/>
    <property type="evidence" value="ECO:0007669"/>
    <property type="project" value="TreeGrafter"/>
</dbReference>
<dbReference type="GO" id="GO:0004107">
    <property type="term" value="F:chorismate synthase activity"/>
    <property type="evidence" value="ECO:0007669"/>
    <property type="project" value="UniProtKB-UniRule"/>
</dbReference>
<dbReference type="GO" id="GO:0010181">
    <property type="term" value="F:FMN binding"/>
    <property type="evidence" value="ECO:0007669"/>
    <property type="project" value="TreeGrafter"/>
</dbReference>
<dbReference type="GO" id="GO:0008652">
    <property type="term" value="P:amino acid biosynthetic process"/>
    <property type="evidence" value="ECO:0007669"/>
    <property type="project" value="UniProtKB-KW"/>
</dbReference>
<dbReference type="GO" id="GO:0009073">
    <property type="term" value="P:aromatic amino acid family biosynthetic process"/>
    <property type="evidence" value="ECO:0007669"/>
    <property type="project" value="UniProtKB-KW"/>
</dbReference>
<dbReference type="GO" id="GO:0009423">
    <property type="term" value="P:chorismate biosynthetic process"/>
    <property type="evidence" value="ECO:0007669"/>
    <property type="project" value="UniProtKB-UniRule"/>
</dbReference>
<dbReference type="CDD" id="cd07304">
    <property type="entry name" value="Chorismate_synthase"/>
    <property type="match status" value="1"/>
</dbReference>
<dbReference type="FunFam" id="3.60.150.10:FF:000001">
    <property type="entry name" value="Chorismate synthase"/>
    <property type="match status" value="1"/>
</dbReference>
<dbReference type="Gene3D" id="3.60.150.10">
    <property type="entry name" value="Chorismate synthase AroC"/>
    <property type="match status" value="1"/>
</dbReference>
<dbReference type="HAMAP" id="MF_00300">
    <property type="entry name" value="Chorismate_synth"/>
    <property type="match status" value="1"/>
</dbReference>
<dbReference type="InterPro" id="IPR000453">
    <property type="entry name" value="Chorismate_synth"/>
</dbReference>
<dbReference type="InterPro" id="IPR035904">
    <property type="entry name" value="Chorismate_synth_AroC_sf"/>
</dbReference>
<dbReference type="InterPro" id="IPR020541">
    <property type="entry name" value="Chorismate_synthase_CS"/>
</dbReference>
<dbReference type="NCBIfam" id="TIGR00033">
    <property type="entry name" value="aroC"/>
    <property type="match status" value="1"/>
</dbReference>
<dbReference type="NCBIfam" id="NF003793">
    <property type="entry name" value="PRK05382.1"/>
    <property type="match status" value="1"/>
</dbReference>
<dbReference type="PANTHER" id="PTHR21085">
    <property type="entry name" value="CHORISMATE SYNTHASE"/>
    <property type="match status" value="1"/>
</dbReference>
<dbReference type="PANTHER" id="PTHR21085:SF0">
    <property type="entry name" value="CHORISMATE SYNTHASE"/>
    <property type="match status" value="1"/>
</dbReference>
<dbReference type="Pfam" id="PF01264">
    <property type="entry name" value="Chorismate_synt"/>
    <property type="match status" value="1"/>
</dbReference>
<dbReference type="PIRSF" id="PIRSF001456">
    <property type="entry name" value="Chorismate_synth"/>
    <property type="match status" value="1"/>
</dbReference>
<dbReference type="SUPFAM" id="SSF103263">
    <property type="entry name" value="Chorismate synthase, AroC"/>
    <property type="match status" value="1"/>
</dbReference>
<dbReference type="PROSITE" id="PS00787">
    <property type="entry name" value="CHORISMATE_SYNTHASE_1"/>
    <property type="match status" value="1"/>
</dbReference>
<dbReference type="PROSITE" id="PS00788">
    <property type="entry name" value="CHORISMATE_SYNTHASE_2"/>
    <property type="match status" value="1"/>
</dbReference>
<dbReference type="PROSITE" id="PS00789">
    <property type="entry name" value="CHORISMATE_SYNTHASE_3"/>
    <property type="match status" value="1"/>
</dbReference>
<name>AROC_STRM5</name>
<comment type="function">
    <text evidence="1">Catalyzes the anti-1,4-elimination of the C-3 phosphate and the C-6 proR hydrogen from 5-enolpyruvylshikimate-3-phosphate (EPSP) to yield chorismate, which is the branch point compound that serves as the starting substrate for the three terminal pathways of aromatic amino acid biosynthesis. This reaction introduces a second double bond into the aromatic ring system.</text>
</comment>
<comment type="catalytic activity">
    <reaction evidence="1">
        <text>5-O-(1-carboxyvinyl)-3-phosphoshikimate = chorismate + phosphate</text>
        <dbReference type="Rhea" id="RHEA:21020"/>
        <dbReference type="ChEBI" id="CHEBI:29748"/>
        <dbReference type="ChEBI" id="CHEBI:43474"/>
        <dbReference type="ChEBI" id="CHEBI:57701"/>
        <dbReference type="EC" id="4.2.3.5"/>
    </reaction>
</comment>
<comment type="cofactor">
    <cofactor evidence="1">
        <name>FMNH2</name>
        <dbReference type="ChEBI" id="CHEBI:57618"/>
    </cofactor>
    <text evidence="1">Reduced FMN (FMNH(2)).</text>
</comment>
<comment type="pathway">
    <text evidence="1">Metabolic intermediate biosynthesis; chorismate biosynthesis; chorismate from D-erythrose 4-phosphate and phosphoenolpyruvate: step 7/7.</text>
</comment>
<comment type="subunit">
    <text evidence="1">Homotetramer.</text>
</comment>
<comment type="similarity">
    <text evidence="1">Belongs to the chorismate synthase family.</text>
</comment>
<sequence>MSSNSFGKLFTVTTFGESHGPAIGCVIDGCPPGLALDAAEFAHDLQRRATGKSRHTSARREADEVEILSGVYEGLTTGTPIALLIRNTDQRSKDYANIGQQFRPGHADYSYWHKYGIRDPRGGGRSSARETTMRVAAGVVAKKWLAERFGVTVRGYLSQLGEITPAGFDWSAVKDNPFFWPHAAQVPELEAYMDALRKSGDSVGACVDVVADNVPPGWGEPIYGKLDGDLAAALMSINAVKGVEIGDGFASAVQKGTEHRDLLTPQGFASNHAGGILGGISTGQPVVASIVLKPTSSLRLPGPSLDTSGNVVEVVTTGRHDPCVGIRATPIAEAMVAMVLMDQALRHRAQCGDVGTITPRIPGQFDG</sequence>
<organism>
    <name type="scientific">Stenotrophomonas maltophilia (strain R551-3)</name>
    <dbReference type="NCBI Taxonomy" id="391008"/>
    <lineage>
        <taxon>Bacteria</taxon>
        <taxon>Pseudomonadati</taxon>
        <taxon>Pseudomonadota</taxon>
        <taxon>Gammaproteobacteria</taxon>
        <taxon>Lysobacterales</taxon>
        <taxon>Lysobacteraceae</taxon>
        <taxon>Stenotrophomonas</taxon>
        <taxon>Stenotrophomonas maltophilia group</taxon>
    </lineage>
</organism>
<gene>
    <name evidence="1" type="primary">aroC</name>
    <name type="ordered locus">Smal_2856</name>
</gene>
<accession>B4SQW1</accession>
<feature type="chain" id="PRO_1000115402" description="Chorismate synthase">
    <location>
        <begin position="1"/>
        <end position="367"/>
    </location>
</feature>
<feature type="binding site" evidence="1">
    <location>
        <position position="48"/>
    </location>
    <ligand>
        <name>NADP(+)</name>
        <dbReference type="ChEBI" id="CHEBI:58349"/>
    </ligand>
</feature>
<feature type="binding site" evidence="1">
    <location>
        <position position="54"/>
    </location>
    <ligand>
        <name>NADP(+)</name>
        <dbReference type="ChEBI" id="CHEBI:58349"/>
    </ligand>
</feature>
<feature type="binding site" evidence="1">
    <location>
        <begin position="125"/>
        <end position="127"/>
    </location>
    <ligand>
        <name>FMN</name>
        <dbReference type="ChEBI" id="CHEBI:58210"/>
    </ligand>
</feature>
<feature type="binding site" evidence="1">
    <location>
        <begin position="238"/>
        <end position="239"/>
    </location>
    <ligand>
        <name>FMN</name>
        <dbReference type="ChEBI" id="CHEBI:58210"/>
    </ligand>
</feature>
<feature type="binding site" evidence="1">
    <location>
        <position position="278"/>
    </location>
    <ligand>
        <name>FMN</name>
        <dbReference type="ChEBI" id="CHEBI:58210"/>
    </ligand>
</feature>
<feature type="binding site" evidence="1">
    <location>
        <begin position="293"/>
        <end position="297"/>
    </location>
    <ligand>
        <name>FMN</name>
        <dbReference type="ChEBI" id="CHEBI:58210"/>
    </ligand>
</feature>
<feature type="binding site" evidence="1">
    <location>
        <position position="319"/>
    </location>
    <ligand>
        <name>FMN</name>
        <dbReference type="ChEBI" id="CHEBI:58210"/>
    </ligand>
</feature>
<reference key="1">
    <citation type="submission" date="2008-06" db="EMBL/GenBank/DDBJ databases">
        <title>Complete sequence of Stenotrophomonas maltophilia R551-3.</title>
        <authorList>
            <consortium name="US DOE Joint Genome Institute"/>
            <person name="Lucas S."/>
            <person name="Copeland A."/>
            <person name="Lapidus A."/>
            <person name="Glavina del Rio T."/>
            <person name="Dalin E."/>
            <person name="Tice H."/>
            <person name="Pitluck S."/>
            <person name="Chain P."/>
            <person name="Malfatti S."/>
            <person name="Shin M."/>
            <person name="Vergez L."/>
            <person name="Lang D."/>
            <person name="Schmutz J."/>
            <person name="Larimer F."/>
            <person name="Land M."/>
            <person name="Hauser L."/>
            <person name="Kyrpides N."/>
            <person name="Mikhailova N."/>
            <person name="Taghavi S."/>
            <person name="Monchy S."/>
            <person name="Newman L."/>
            <person name="Vangronsveld J."/>
            <person name="van der Lelie D."/>
            <person name="Richardson P."/>
        </authorList>
    </citation>
    <scope>NUCLEOTIDE SEQUENCE [LARGE SCALE GENOMIC DNA]</scope>
    <source>
        <strain>R551-3</strain>
    </source>
</reference>
<protein>
    <recommendedName>
        <fullName evidence="1">Chorismate synthase</fullName>
        <shortName evidence="1">CS</shortName>
        <ecNumber evidence="1">4.2.3.5</ecNumber>
    </recommendedName>
    <alternativeName>
        <fullName evidence="1">5-enolpyruvylshikimate-3-phosphate phospholyase</fullName>
    </alternativeName>
</protein>
<evidence type="ECO:0000255" key="1">
    <source>
        <dbReference type="HAMAP-Rule" id="MF_00300"/>
    </source>
</evidence>